<name>PPN_HUMAN</name>
<dbReference type="EMBL" id="AY358330">
    <property type="protein sequence ID" value="AAQ88696.1"/>
    <property type="molecule type" value="mRNA"/>
</dbReference>
<dbReference type="EMBL" id="AK125658">
    <property type="protein sequence ID" value="BAC86235.1"/>
    <property type="status" value="ALT_INIT"/>
    <property type="molecule type" value="mRNA"/>
</dbReference>
<dbReference type="EMBL" id="AK294560">
    <property type="protein sequence ID" value="BAG57757.1"/>
    <property type="status" value="ALT_INIT"/>
    <property type="molecule type" value="mRNA"/>
</dbReference>
<dbReference type="EMBL" id="AK293773">
    <property type="protein sequence ID" value="BAG57189.1"/>
    <property type="status" value="ALT_SEQ"/>
    <property type="molecule type" value="mRNA"/>
</dbReference>
<dbReference type="EMBL" id="AC004846">
    <property type="status" value="NOT_ANNOTATED_CDS"/>
    <property type="molecule type" value="Genomic_DNA"/>
</dbReference>
<dbReference type="EMBL" id="AF109907">
    <property type="protein sequence ID" value="AAC97963.1"/>
    <property type="status" value="ALT_SEQ"/>
    <property type="molecule type" value="Genomic_DNA"/>
</dbReference>
<dbReference type="EMBL" id="BC042057">
    <property type="protein sequence ID" value="AAH42057.1"/>
    <property type="molecule type" value="mRNA"/>
</dbReference>
<dbReference type="EMBL" id="AL110280">
    <property type="protein sequence ID" value="CAH56406.1"/>
    <property type="status" value="ALT_SEQ"/>
    <property type="molecule type" value="mRNA"/>
</dbReference>
<dbReference type="EMBL" id="BX470414">
    <property type="status" value="NOT_ANNOTATED_CDS"/>
    <property type="molecule type" value="mRNA"/>
</dbReference>
<dbReference type="EMBL" id="BX537757">
    <property type="protein sequence ID" value="CAD97826.1"/>
    <property type="molecule type" value="mRNA"/>
</dbReference>
<dbReference type="EMBL" id="AK131073">
    <property type="protein sequence ID" value="BAC85123.1"/>
    <property type="molecule type" value="mRNA"/>
</dbReference>
<dbReference type="CCDS" id="CCDS32114.1">
    <molecule id="O95428-6"/>
</dbReference>
<dbReference type="CCDS" id="CCDS91898.1">
    <molecule id="O95428-1"/>
</dbReference>
<dbReference type="CCDS" id="CCDS91899.1">
    <molecule id="O95428-5"/>
</dbReference>
<dbReference type="RefSeq" id="NP_001352835.1">
    <molecule id="O95428-1"/>
    <property type="nucleotide sequence ID" value="NM_001365906.3"/>
</dbReference>
<dbReference type="RefSeq" id="NP_001352836.1">
    <molecule id="O95428-5"/>
    <property type="nucleotide sequence ID" value="NM_001365907.2"/>
</dbReference>
<dbReference type="RefSeq" id="NP_775733.3">
    <molecule id="O95428-6"/>
    <property type="nucleotide sequence ID" value="NM_173462.3"/>
</dbReference>
<dbReference type="RefSeq" id="XP_011535592.1">
    <property type="nucleotide sequence ID" value="XM_011537290.2"/>
</dbReference>
<dbReference type="RefSeq" id="XP_011535593.1">
    <molecule id="O95428-1"/>
    <property type="nucleotide sequence ID" value="XM_011537291.4"/>
</dbReference>
<dbReference type="RefSeq" id="XP_011535594.1">
    <molecule id="O95428-1"/>
    <property type="nucleotide sequence ID" value="XM_011537292.4"/>
</dbReference>
<dbReference type="SMR" id="O95428"/>
<dbReference type="BioGRID" id="124645">
    <property type="interactions" value="74"/>
</dbReference>
<dbReference type="FunCoup" id="O95428">
    <property type="interactions" value="63"/>
</dbReference>
<dbReference type="IntAct" id="O95428">
    <property type="interactions" value="14"/>
</dbReference>
<dbReference type="STRING" id="9606.ENSP00000345395"/>
<dbReference type="MEROPS" id="I02.972"/>
<dbReference type="GlyCosmos" id="O95428">
    <property type="glycosylation" value="11 sites, 3 glycans"/>
</dbReference>
<dbReference type="GlyGen" id="O95428">
    <property type="glycosylation" value="18 sites, 4 O-linked glycans (18 sites)"/>
</dbReference>
<dbReference type="iPTMnet" id="O95428"/>
<dbReference type="PhosphoSitePlus" id="O95428"/>
<dbReference type="BioMuta" id="PAPLN"/>
<dbReference type="jPOST" id="O95428"/>
<dbReference type="MassIVE" id="O95428"/>
<dbReference type="PaxDb" id="9606-ENSP00000345395"/>
<dbReference type="PeptideAtlas" id="O95428"/>
<dbReference type="ProteomicsDB" id="50869">
    <molecule id="O95428-1"/>
</dbReference>
<dbReference type="ProteomicsDB" id="50870">
    <molecule id="O95428-2"/>
</dbReference>
<dbReference type="ProteomicsDB" id="50871">
    <molecule id="O95428-3"/>
</dbReference>
<dbReference type="ProteomicsDB" id="50872">
    <molecule id="O95428-4"/>
</dbReference>
<dbReference type="ProteomicsDB" id="50873">
    <molecule id="O95428-5"/>
</dbReference>
<dbReference type="ProteomicsDB" id="50874">
    <molecule id="O95428-6"/>
</dbReference>
<dbReference type="Antibodypedia" id="63258">
    <property type="antibodies" value="113 antibodies from 15 providers"/>
</dbReference>
<dbReference type="DNASU" id="89932"/>
<dbReference type="Ensembl" id="ENST00000340738.9">
    <molecule id="O95428-6"/>
    <property type="protein sequence ID" value="ENSP00000345395.5"/>
    <property type="gene ID" value="ENSG00000100767.17"/>
</dbReference>
<dbReference type="Ensembl" id="ENST00000554301.5">
    <molecule id="O95428-1"/>
    <property type="protein sequence ID" value="ENSP00000451803.1"/>
    <property type="gene ID" value="ENSG00000100767.17"/>
</dbReference>
<dbReference type="Ensembl" id="ENST00000555445.5">
    <molecule id="O95428-5"/>
    <property type="protein sequence ID" value="ENSP00000451729.1"/>
    <property type="gene ID" value="ENSG00000100767.17"/>
</dbReference>
<dbReference type="Ensembl" id="ENST00000644200.2">
    <molecule id="O95428-1"/>
    <property type="protein sequence ID" value="ENSP00000495882.2"/>
    <property type="gene ID" value="ENSG00000100767.17"/>
</dbReference>
<dbReference type="GeneID" id="89932"/>
<dbReference type="KEGG" id="hsa:89932"/>
<dbReference type="MANE-Select" id="ENST00000644200.2">
    <property type="protein sequence ID" value="ENSP00000495882.2"/>
    <property type="RefSeq nucleotide sequence ID" value="NM_001365906.3"/>
    <property type="RefSeq protein sequence ID" value="NP_001352835.1"/>
</dbReference>
<dbReference type="UCSC" id="uc001xnw.5">
    <molecule id="O95428-1"/>
    <property type="organism name" value="human"/>
</dbReference>
<dbReference type="AGR" id="HGNC:19262"/>
<dbReference type="CTD" id="89932"/>
<dbReference type="DisGeNET" id="89932"/>
<dbReference type="GeneCards" id="PAPLN"/>
<dbReference type="HGNC" id="HGNC:19262">
    <property type="gene designation" value="PAPLN"/>
</dbReference>
<dbReference type="HPA" id="ENSG00000100767">
    <property type="expression patterns" value="Low tissue specificity"/>
</dbReference>
<dbReference type="MIM" id="617785">
    <property type="type" value="gene"/>
</dbReference>
<dbReference type="neXtProt" id="NX_O95428"/>
<dbReference type="OpenTargets" id="ENSG00000100767"/>
<dbReference type="PharmGKB" id="PA134914395"/>
<dbReference type="VEuPathDB" id="HostDB:ENSG00000100767"/>
<dbReference type="eggNOG" id="KOG3510">
    <property type="taxonomic scope" value="Eukaryota"/>
</dbReference>
<dbReference type="eggNOG" id="KOG4597">
    <property type="taxonomic scope" value="Eukaryota"/>
</dbReference>
<dbReference type="GeneTree" id="ENSGT00940000156891"/>
<dbReference type="HOGENOM" id="CLU_000660_7_0_1"/>
<dbReference type="InParanoid" id="O95428"/>
<dbReference type="OMA" id="KLDSGWF"/>
<dbReference type="OrthoDB" id="9948486at2759"/>
<dbReference type="PAN-GO" id="O95428">
    <property type="GO annotations" value="3 GO annotations based on evolutionary models"/>
</dbReference>
<dbReference type="PhylomeDB" id="O95428"/>
<dbReference type="TreeFam" id="TF316874"/>
<dbReference type="PathwayCommons" id="O95428"/>
<dbReference type="SignaLink" id="O95428"/>
<dbReference type="BioGRID-ORCS" id="89932">
    <property type="hits" value="6 hits in 1148 CRISPR screens"/>
</dbReference>
<dbReference type="ChiTaRS" id="PAPLN">
    <property type="organism name" value="human"/>
</dbReference>
<dbReference type="GeneWiki" id="PAPLN"/>
<dbReference type="GenomeRNAi" id="89932"/>
<dbReference type="Pharos" id="O95428">
    <property type="development level" value="Tbio"/>
</dbReference>
<dbReference type="PRO" id="PR:O95428"/>
<dbReference type="Proteomes" id="UP000005640">
    <property type="component" value="Chromosome 14"/>
</dbReference>
<dbReference type="RNAct" id="O95428">
    <property type="molecule type" value="protein"/>
</dbReference>
<dbReference type="Bgee" id="ENSG00000100767">
    <property type="expression patterns" value="Expressed in tibial nerve and 162 other cell types or tissues"/>
</dbReference>
<dbReference type="ExpressionAtlas" id="O95428">
    <property type="expression patterns" value="baseline and differential"/>
</dbReference>
<dbReference type="GO" id="GO:0005576">
    <property type="term" value="C:extracellular region"/>
    <property type="evidence" value="ECO:0007669"/>
    <property type="project" value="UniProtKB-SubCell"/>
</dbReference>
<dbReference type="GO" id="GO:0004867">
    <property type="term" value="F:serine-type endopeptidase inhibitor activity"/>
    <property type="evidence" value="ECO:0007669"/>
    <property type="project" value="UniProtKB-KW"/>
</dbReference>
<dbReference type="GO" id="GO:0030198">
    <property type="term" value="P:extracellular matrix organization"/>
    <property type="evidence" value="ECO:0007669"/>
    <property type="project" value="InterPro"/>
</dbReference>
<dbReference type="CDD" id="cd22635">
    <property type="entry name" value="Kunitz_papilin"/>
    <property type="match status" value="1"/>
</dbReference>
<dbReference type="FunFam" id="2.60.120.830:FF:000001">
    <property type="entry name" value="A disintegrin and metalloproteinase with thrombospondin motifs 1"/>
    <property type="match status" value="1"/>
</dbReference>
<dbReference type="FunFam" id="2.20.100.10:FF:000005">
    <property type="entry name" value="ADAM metallopeptidase with thrombospondin type 1 motif 9"/>
    <property type="match status" value="2"/>
</dbReference>
<dbReference type="FunFam" id="2.20.100.10:FF:000009">
    <property type="entry name" value="ADAMTS-like protein 3 isoform A"/>
    <property type="match status" value="1"/>
</dbReference>
<dbReference type="FunFam" id="2.60.40.10:FF:002371">
    <property type="entry name" value="Papilin"/>
    <property type="match status" value="1"/>
</dbReference>
<dbReference type="FunFam" id="4.10.410.10:FF:000017">
    <property type="entry name" value="papilin isoform X2"/>
    <property type="match status" value="1"/>
</dbReference>
<dbReference type="FunFam" id="2.20.100.10:FF:000001">
    <property type="entry name" value="semaphorin-5A isoform X1"/>
    <property type="match status" value="1"/>
</dbReference>
<dbReference type="Gene3D" id="2.60.120.830">
    <property type="match status" value="1"/>
</dbReference>
<dbReference type="Gene3D" id="2.60.40.10">
    <property type="entry name" value="Immunoglobulins"/>
    <property type="match status" value="3"/>
</dbReference>
<dbReference type="Gene3D" id="4.10.410.10">
    <property type="entry name" value="Pancreatic trypsin inhibitor Kunitz domain"/>
    <property type="match status" value="1"/>
</dbReference>
<dbReference type="Gene3D" id="2.20.100.10">
    <property type="entry name" value="Thrombospondin type-1 (TSP1) repeat"/>
    <property type="match status" value="5"/>
</dbReference>
<dbReference type="InterPro" id="IPR013273">
    <property type="entry name" value="ADAMTS/ADAMTS-like"/>
</dbReference>
<dbReference type="InterPro" id="IPR050439">
    <property type="entry name" value="ADAMTS_ADAMTS-like"/>
</dbReference>
<dbReference type="InterPro" id="IPR045371">
    <property type="entry name" value="ADAMTS_CR_3"/>
</dbReference>
<dbReference type="InterPro" id="IPR010294">
    <property type="entry name" value="ADAMTS_spacer1"/>
</dbReference>
<dbReference type="InterPro" id="IPR007110">
    <property type="entry name" value="Ig-like_dom"/>
</dbReference>
<dbReference type="InterPro" id="IPR036179">
    <property type="entry name" value="Ig-like_dom_sf"/>
</dbReference>
<dbReference type="InterPro" id="IPR013783">
    <property type="entry name" value="Ig-like_fold"/>
</dbReference>
<dbReference type="InterPro" id="IPR013098">
    <property type="entry name" value="Ig_I-set"/>
</dbReference>
<dbReference type="InterPro" id="IPR003599">
    <property type="entry name" value="Ig_sub"/>
</dbReference>
<dbReference type="InterPro" id="IPR003598">
    <property type="entry name" value="Ig_sub2"/>
</dbReference>
<dbReference type="InterPro" id="IPR013106">
    <property type="entry name" value="Ig_V-set"/>
</dbReference>
<dbReference type="InterPro" id="IPR002223">
    <property type="entry name" value="Kunitz_BPTI"/>
</dbReference>
<dbReference type="InterPro" id="IPR036880">
    <property type="entry name" value="Kunitz_BPTI_sf"/>
</dbReference>
<dbReference type="InterPro" id="IPR010909">
    <property type="entry name" value="PLAC"/>
</dbReference>
<dbReference type="InterPro" id="IPR020901">
    <property type="entry name" value="Prtase_inh_Kunz-CS"/>
</dbReference>
<dbReference type="InterPro" id="IPR000884">
    <property type="entry name" value="TSP1_rpt"/>
</dbReference>
<dbReference type="InterPro" id="IPR036383">
    <property type="entry name" value="TSP1_rpt_sf"/>
</dbReference>
<dbReference type="PANTHER" id="PTHR13723">
    <property type="entry name" value="ADAMTS A DISINTEGRIN AND METALLOPROTEASE WITH THROMBOSPONDIN MOTIFS PROTEASE"/>
    <property type="match status" value="1"/>
</dbReference>
<dbReference type="PANTHER" id="PTHR13723:SF281">
    <property type="entry name" value="PAPILIN"/>
    <property type="match status" value="1"/>
</dbReference>
<dbReference type="Pfam" id="PF19236">
    <property type="entry name" value="ADAMTS_CR_3"/>
    <property type="match status" value="1"/>
</dbReference>
<dbReference type="Pfam" id="PF05986">
    <property type="entry name" value="ADAMTS_spacer1"/>
    <property type="match status" value="1"/>
</dbReference>
<dbReference type="Pfam" id="PF07679">
    <property type="entry name" value="I-set"/>
    <property type="match status" value="3"/>
</dbReference>
<dbReference type="Pfam" id="PF00014">
    <property type="entry name" value="Kunitz_BPTI"/>
    <property type="match status" value="1"/>
</dbReference>
<dbReference type="Pfam" id="PF16626">
    <property type="entry name" value="Papilin_u7"/>
    <property type="match status" value="1"/>
</dbReference>
<dbReference type="Pfam" id="PF08686">
    <property type="entry name" value="PLAC"/>
    <property type="match status" value="1"/>
</dbReference>
<dbReference type="Pfam" id="PF19030">
    <property type="entry name" value="TSP1_ADAMTS"/>
    <property type="match status" value="4"/>
</dbReference>
<dbReference type="Pfam" id="PF00090">
    <property type="entry name" value="TSP_1"/>
    <property type="match status" value="1"/>
</dbReference>
<dbReference type="PRINTS" id="PR01857">
    <property type="entry name" value="ADAMTSFAMILY"/>
</dbReference>
<dbReference type="PRINTS" id="PR00759">
    <property type="entry name" value="BASICPTASE"/>
</dbReference>
<dbReference type="SMART" id="SM00409">
    <property type="entry name" value="IG"/>
    <property type="match status" value="3"/>
</dbReference>
<dbReference type="SMART" id="SM00408">
    <property type="entry name" value="IGc2"/>
    <property type="match status" value="3"/>
</dbReference>
<dbReference type="SMART" id="SM00406">
    <property type="entry name" value="IGv"/>
    <property type="match status" value="3"/>
</dbReference>
<dbReference type="SMART" id="SM00131">
    <property type="entry name" value="KU"/>
    <property type="match status" value="1"/>
</dbReference>
<dbReference type="SMART" id="SM00209">
    <property type="entry name" value="TSP1"/>
    <property type="match status" value="5"/>
</dbReference>
<dbReference type="SUPFAM" id="SSF57362">
    <property type="entry name" value="BPTI-like"/>
    <property type="match status" value="1"/>
</dbReference>
<dbReference type="SUPFAM" id="SSF48726">
    <property type="entry name" value="Immunoglobulin"/>
    <property type="match status" value="3"/>
</dbReference>
<dbReference type="SUPFAM" id="SSF82895">
    <property type="entry name" value="TSP-1 type 1 repeat"/>
    <property type="match status" value="5"/>
</dbReference>
<dbReference type="PROSITE" id="PS00280">
    <property type="entry name" value="BPTI_KUNITZ_1"/>
    <property type="match status" value="1"/>
</dbReference>
<dbReference type="PROSITE" id="PS50279">
    <property type="entry name" value="BPTI_KUNITZ_2"/>
    <property type="match status" value="1"/>
</dbReference>
<dbReference type="PROSITE" id="PS50835">
    <property type="entry name" value="IG_LIKE"/>
    <property type="match status" value="3"/>
</dbReference>
<dbReference type="PROSITE" id="PS50900">
    <property type="entry name" value="PLAC"/>
    <property type="match status" value="1"/>
</dbReference>
<dbReference type="PROSITE" id="PS50092">
    <property type="entry name" value="TSP1"/>
    <property type="match status" value="5"/>
</dbReference>
<reference key="1">
    <citation type="journal article" date="2003" name="Genome Res.">
        <title>The secreted protein discovery initiative (SPDI), a large-scale effort to identify novel human secreted and transmembrane proteins: a bioinformatics assessment.</title>
        <authorList>
            <person name="Clark H.F."/>
            <person name="Gurney A.L."/>
            <person name="Abaya E."/>
            <person name="Baker K."/>
            <person name="Baldwin D.T."/>
            <person name="Brush J."/>
            <person name="Chen J."/>
            <person name="Chow B."/>
            <person name="Chui C."/>
            <person name="Crowley C."/>
            <person name="Currell B."/>
            <person name="Deuel B."/>
            <person name="Dowd P."/>
            <person name="Eaton D."/>
            <person name="Foster J.S."/>
            <person name="Grimaldi C."/>
            <person name="Gu Q."/>
            <person name="Hass P.E."/>
            <person name="Heldens S."/>
            <person name="Huang A."/>
            <person name="Kim H.S."/>
            <person name="Klimowski L."/>
            <person name="Jin Y."/>
            <person name="Johnson S."/>
            <person name="Lee J."/>
            <person name="Lewis L."/>
            <person name="Liao D."/>
            <person name="Mark M.R."/>
            <person name="Robbie E."/>
            <person name="Sanchez C."/>
            <person name="Schoenfeld J."/>
            <person name="Seshagiri S."/>
            <person name="Simmons L."/>
            <person name="Singh J."/>
            <person name="Smith V."/>
            <person name="Stinson J."/>
            <person name="Vagts A."/>
            <person name="Vandlen R.L."/>
            <person name="Watanabe C."/>
            <person name="Wieand D."/>
            <person name="Woods K."/>
            <person name="Xie M.-H."/>
            <person name="Yansura D.G."/>
            <person name="Yi S."/>
            <person name="Yu G."/>
            <person name="Yuan J."/>
            <person name="Zhang M."/>
            <person name="Zhang Z."/>
            <person name="Goddard A.D."/>
            <person name="Wood W.I."/>
            <person name="Godowski P.J."/>
            <person name="Gray A.M."/>
        </authorList>
    </citation>
    <scope>NUCLEOTIDE SEQUENCE [LARGE SCALE MRNA] (ISOFORM 2)</scope>
    <scope>VARIANT MET-1201</scope>
</reference>
<reference key="2">
    <citation type="journal article" date="2004" name="Nat. Genet.">
        <title>Complete sequencing and characterization of 21,243 full-length human cDNAs.</title>
        <authorList>
            <person name="Ota T."/>
            <person name="Suzuki Y."/>
            <person name="Nishikawa T."/>
            <person name="Otsuki T."/>
            <person name="Sugiyama T."/>
            <person name="Irie R."/>
            <person name="Wakamatsu A."/>
            <person name="Hayashi K."/>
            <person name="Sato H."/>
            <person name="Nagai K."/>
            <person name="Kimura K."/>
            <person name="Makita H."/>
            <person name="Sekine M."/>
            <person name="Obayashi M."/>
            <person name="Nishi T."/>
            <person name="Shibahara T."/>
            <person name="Tanaka T."/>
            <person name="Ishii S."/>
            <person name="Yamamoto J."/>
            <person name="Saito K."/>
            <person name="Kawai Y."/>
            <person name="Isono Y."/>
            <person name="Nakamura Y."/>
            <person name="Nagahari K."/>
            <person name="Murakami K."/>
            <person name="Yasuda T."/>
            <person name="Iwayanagi T."/>
            <person name="Wagatsuma M."/>
            <person name="Shiratori A."/>
            <person name="Sudo H."/>
            <person name="Hosoiri T."/>
            <person name="Kaku Y."/>
            <person name="Kodaira H."/>
            <person name="Kondo H."/>
            <person name="Sugawara M."/>
            <person name="Takahashi M."/>
            <person name="Kanda K."/>
            <person name="Yokoi T."/>
            <person name="Furuya T."/>
            <person name="Kikkawa E."/>
            <person name="Omura Y."/>
            <person name="Abe K."/>
            <person name="Kamihara K."/>
            <person name="Katsuta N."/>
            <person name="Sato K."/>
            <person name="Tanikawa M."/>
            <person name="Yamazaki M."/>
            <person name="Ninomiya K."/>
            <person name="Ishibashi T."/>
            <person name="Yamashita H."/>
            <person name="Murakawa K."/>
            <person name="Fujimori K."/>
            <person name="Tanai H."/>
            <person name="Kimata M."/>
            <person name="Watanabe M."/>
            <person name="Hiraoka S."/>
            <person name="Chiba Y."/>
            <person name="Ishida S."/>
            <person name="Ono Y."/>
            <person name="Takiguchi S."/>
            <person name="Watanabe S."/>
            <person name="Yosida M."/>
            <person name="Hotuta T."/>
            <person name="Kusano J."/>
            <person name="Kanehori K."/>
            <person name="Takahashi-Fujii A."/>
            <person name="Hara H."/>
            <person name="Tanase T.-O."/>
            <person name="Nomura Y."/>
            <person name="Togiya S."/>
            <person name="Komai F."/>
            <person name="Hara R."/>
            <person name="Takeuchi K."/>
            <person name="Arita M."/>
            <person name="Imose N."/>
            <person name="Musashino K."/>
            <person name="Yuuki H."/>
            <person name="Oshima A."/>
            <person name="Sasaki N."/>
            <person name="Aotsuka S."/>
            <person name="Yoshikawa Y."/>
            <person name="Matsunawa H."/>
            <person name="Ichihara T."/>
            <person name="Shiohata N."/>
            <person name="Sano S."/>
            <person name="Moriya S."/>
            <person name="Momiyama H."/>
            <person name="Satoh N."/>
            <person name="Takami S."/>
            <person name="Terashima Y."/>
            <person name="Suzuki O."/>
            <person name="Nakagawa S."/>
            <person name="Senoh A."/>
            <person name="Mizoguchi H."/>
            <person name="Goto Y."/>
            <person name="Shimizu F."/>
            <person name="Wakebe H."/>
            <person name="Hishigaki H."/>
            <person name="Watanabe T."/>
            <person name="Sugiyama A."/>
            <person name="Takemoto M."/>
            <person name="Kawakami B."/>
            <person name="Yamazaki M."/>
            <person name="Watanabe K."/>
            <person name="Kumagai A."/>
            <person name="Itakura S."/>
            <person name="Fukuzumi Y."/>
            <person name="Fujimori Y."/>
            <person name="Komiyama M."/>
            <person name="Tashiro H."/>
            <person name="Tanigami A."/>
            <person name="Fujiwara T."/>
            <person name="Ono T."/>
            <person name="Yamada K."/>
            <person name="Fujii Y."/>
            <person name="Ozaki K."/>
            <person name="Hirao M."/>
            <person name="Ohmori Y."/>
            <person name="Kawabata A."/>
            <person name="Hikiji T."/>
            <person name="Kobatake N."/>
            <person name="Inagaki H."/>
            <person name="Ikema Y."/>
            <person name="Okamoto S."/>
            <person name="Okitani R."/>
            <person name="Kawakami T."/>
            <person name="Noguchi S."/>
            <person name="Itoh T."/>
            <person name="Shigeta K."/>
            <person name="Senba T."/>
            <person name="Matsumura K."/>
            <person name="Nakajima Y."/>
            <person name="Mizuno T."/>
            <person name="Morinaga M."/>
            <person name="Sasaki M."/>
            <person name="Togashi T."/>
            <person name="Oyama M."/>
            <person name="Hata H."/>
            <person name="Watanabe M."/>
            <person name="Komatsu T."/>
            <person name="Mizushima-Sugano J."/>
            <person name="Satoh T."/>
            <person name="Shirai Y."/>
            <person name="Takahashi Y."/>
            <person name="Nakagawa K."/>
            <person name="Okumura K."/>
            <person name="Nagase T."/>
            <person name="Nomura N."/>
            <person name="Kikuchi H."/>
            <person name="Masuho Y."/>
            <person name="Yamashita R."/>
            <person name="Nakai K."/>
            <person name="Yada T."/>
            <person name="Nakamura Y."/>
            <person name="Ohara O."/>
            <person name="Isogai T."/>
            <person name="Sugano S."/>
        </authorList>
    </citation>
    <scope>NUCLEOTIDE SEQUENCE [LARGE SCALE MRNA] (ISOFORMS 1 AND 5)</scope>
    <scope>NUCLEOTIDE SEQUENCE [LARGE SCALE MRNA] OF 800-1217 (ISOFORM 4)</scope>
    <source>
        <tissue>Amygdala</tissue>
        <tissue>Cerebellum</tissue>
        <tissue>Synovial cell</tissue>
    </source>
</reference>
<reference key="3">
    <citation type="journal article" date="2003" name="Nature">
        <title>The DNA sequence and analysis of human chromosome 14.</title>
        <authorList>
            <person name="Heilig R."/>
            <person name="Eckenberg R."/>
            <person name="Petit J.-L."/>
            <person name="Fonknechten N."/>
            <person name="Da Silva C."/>
            <person name="Cattolico L."/>
            <person name="Levy M."/>
            <person name="Barbe V."/>
            <person name="De Berardinis V."/>
            <person name="Ureta-Vidal A."/>
            <person name="Pelletier E."/>
            <person name="Vico V."/>
            <person name="Anthouard V."/>
            <person name="Rowen L."/>
            <person name="Madan A."/>
            <person name="Qin S."/>
            <person name="Sun H."/>
            <person name="Du H."/>
            <person name="Pepin K."/>
            <person name="Artiguenave F."/>
            <person name="Robert C."/>
            <person name="Cruaud C."/>
            <person name="Bruels T."/>
            <person name="Jaillon O."/>
            <person name="Friedlander L."/>
            <person name="Samson G."/>
            <person name="Brottier P."/>
            <person name="Cure S."/>
            <person name="Segurens B."/>
            <person name="Aniere F."/>
            <person name="Samain S."/>
            <person name="Crespeau H."/>
            <person name="Abbasi N."/>
            <person name="Aiach N."/>
            <person name="Boscus D."/>
            <person name="Dickhoff R."/>
            <person name="Dors M."/>
            <person name="Dubois I."/>
            <person name="Friedman C."/>
            <person name="Gouyvenoux M."/>
            <person name="James R."/>
            <person name="Madan A."/>
            <person name="Mairey-Estrada B."/>
            <person name="Mangenot S."/>
            <person name="Martins N."/>
            <person name="Menard M."/>
            <person name="Oztas S."/>
            <person name="Ratcliffe A."/>
            <person name="Shaffer T."/>
            <person name="Trask B."/>
            <person name="Vacherie B."/>
            <person name="Bellemere C."/>
            <person name="Belser C."/>
            <person name="Besnard-Gonnet M."/>
            <person name="Bartol-Mavel D."/>
            <person name="Boutard M."/>
            <person name="Briez-Silla S."/>
            <person name="Combette S."/>
            <person name="Dufosse-Laurent V."/>
            <person name="Ferron C."/>
            <person name="Lechaplais C."/>
            <person name="Louesse C."/>
            <person name="Muselet D."/>
            <person name="Magdelenat G."/>
            <person name="Pateau E."/>
            <person name="Petit E."/>
            <person name="Sirvain-Trukniewicz P."/>
            <person name="Trybou A."/>
            <person name="Vega-Czarny N."/>
            <person name="Bataille E."/>
            <person name="Bluet E."/>
            <person name="Bordelais I."/>
            <person name="Dubois M."/>
            <person name="Dumont C."/>
            <person name="Guerin T."/>
            <person name="Haffray S."/>
            <person name="Hammadi R."/>
            <person name="Muanga J."/>
            <person name="Pellouin V."/>
            <person name="Robert D."/>
            <person name="Wunderle E."/>
            <person name="Gauguet G."/>
            <person name="Roy A."/>
            <person name="Sainte-Marthe L."/>
            <person name="Verdier J."/>
            <person name="Verdier-Discala C."/>
            <person name="Hillier L.W."/>
            <person name="Fulton L."/>
            <person name="McPherson J."/>
            <person name="Matsuda F."/>
            <person name="Wilson R."/>
            <person name="Scarpelli C."/>
            <person name="Gyapay G."/>
            <person name="Wincker P."/>
            <person name="Saurin W."/>
            <person name="Quetier F."/>
            <person name="Waterston R."/>
            <person name="Hood L."/>
            <person name="Weissenbach J."/>
        </authorList>
    </citation>
    <scope>NUCLEOTIDE SEQUENCE [LARGE SCALE GENOMIC DNA]</scope>
    <scope>VARIANT ARG-896</scope>
</reference>
<reference key="4">
    <citation type="journal article" date="2004" name="Genome Res.">
        <title>The status, quality, and expansion of the NIH full-length cDNA project: the Mammalian Gene Collection (MGC).</title>
        <authorList>
            <consortium name="The MGC Project Team"/>
        </authorList>
    </citation>
    <scope>NUCLEOTIDE SEQUENCE [LARGE SCALE MRNA] (ISOFORM 3)</scope>
    <source>
        <tissue>Ovary</tissue>
    </source>
</reference>
<reference key="5">
    <citation type="journal article" date="2007" name="BMC Genomics">
        <title>The full-ORF clone resource of the German cDNA consortium.</title>
        <authorList>
            <person name="Bechtel S."/>
            <person name="Rosenfelder H."/>
            <person name="Duda A."/>
            <person name="Schmidt C.P."/>
            <person name="Ernst U."/>
            <person name="Wellenreuther R."/>
            <person name="Mehrle A."/>
            <person name="Schuster C."/>
            <person name="Bahr A."/>
            <person name="Bloecker H."/>
            <person name="Heubner D."/>
            <person name="Hoerlein A."/>
            <person name="Michel G."/>
            <person name="Wedler H."/>
            <person name="Koehrer K."/>
            <person name="Ottenwaelder B."/>
            <person name="Poustka A."/>
            <person name="Wiemann S."/>
            <person name="Schupp I."/>
        </authorList>
    </citation>
    <scope>NUCLEOTIDE SEQUENCE [LARGE SCALE MRNA] OF 81-302 (ISOFORM 6)</scope>
    <scope>NUCLEOTIDE SEQUENCE [LARGE SCALE MRNA] OF 619-1278 (ISOFORM 1)</scope>
    <source>
        <tissue>Liver</tissue>
        <tissue>Testis</tissue>
    </source>
</reference>
<reference key="6">
    <citation type="submission" date="2003-09" db="EMBL/GenBank/DDBJ databases">
        <title>The nucleotide sequence of a long cDNA clone isolated from human spleen.</title>
        <authorList>
            <person name="Jikuya H."/>
            <person name="Takano J."/>
            <person name="Kikuno R."/>
            <person name="Nagase T."/>
            <person name="Ohara O."/>
        </authorList>
    </citation>
    <scope>NUCLEOTIDE SEQUENCE [LARGE SCALE MRNA] OF 620-1278 (ISOFORM 1)</scope>
    <source>
        <tissue>Spleen</tissue>
    </source>
</reference>
<keyword id="KW-0025">Alternative splicing</keyword>
<keyword id="KW-1015">Disulfide bond</keyword>
<keyword id="KW-0393">Immunoglobulin domain</keyword>
<keyword id="KW-0646">Protease inhibitor</keyword>
<keyword id="KW-1267">Proteomics identification</keyword>
<keyword id="KW-1185">Reference proteome</keyword>
<keyword id="KW-0677">Repeat</keyword>
<keyword id="KW-0964">Secreted</keyword>
<keyword id="KW-0722">Serine protease inhibitor</keyword>
<keyword id="KW-0732">Signal</keyword>
<organism>
    <name type="scientific">Homo sapiens</name>
    <name type="common">Human</name>
    <dbReference type="NCBI Taxonomy" id="9606"/>
    <lineage>
        <taxon>Eukaryota</taxon>
        <taxon>Metazoa</taxon>
        <taxon>Chordata</taxon>
        <taxon>Craniata</taxon>
        <taxon>Vertebrata</taxon>
        <taxon>Euteleostomi</taxon>
        <taxon>Mammalia</taxon>
        <taxon>Eutheria</taxon>
        <taxon>Euarchontoglires</taxon>
        <taxon>Primates</taxon>
        <taxon>Haplorrhini</taxon>
        <taxon>Catarrhini</taxon>
        <taxon>Hominidae</taxon>
        <taxon>Homo</taxon>
    </lineage>
</organism>
<protein>
    <recommendedName>
        <fullName>Papilin</fullName>
    </recommendedName>
</protein>
<feature type="signal peptide" evidence="2">
    <location>
        <begin position="1"/>
        <end position="18"/>
    </location>
</feature>
<feature type="chain" id="PRO_0000324550" description="Papilin">
    <location>
        <begin position="19"/>
        <end position="1278"/>
    </location>
</feature>
<feature type="domain" description="TSP type-1 1" evidence="4">
    <location>
        <begin position="26"/>
        <end position="80"/>
    </location>
</feature>
<feature type="domain" description="TSP type-1 2" evidence="4">
    <location>
        <begin position="304"/>
        <end position="361"/>
    </location>
</feature>
<feature type="domain" description="TSP type-1 3" evidence="4">
    <location>
        <begin position="362"/>
        <end position="421"/>
    </location>
</feature>
<feature type="domain" description="TSP type-1 4" evidence="4">
    <location>
        <begin position="423"/>
        <end position="481"/>
    </location>
</feature>
<feature type="domain" description="TSP type-1 5" evidence="4">
    <location>
        <begin position="484"/>
        <end position="539"/>
    </location>
</feature>
<feature type="domain" description="BPTI/Kunitz inhibitor" evidence="3">
    <location>
        <begin position="754"/>
        <end position="804"/>
    </location>
</feature>
<feature type="domain" description="Ig-like C2-type 1">
    <location>
        <begin position="900"/>
        <end position="995"/>
    </location>
</feature>
<feature type="domain" description="Ig-like C2-type 2">
    <location>
        <begin position="1033"/>
        <end position="1128"/>
    </location>
</feature>
<feature type="domain" description="Ig-like C2-type 3">
    <location>
        <begin position="1133"/>
        <end position="1218"/>
    </location>
</feature>
<feature type="domain" description="PLAC" evidence="5">
    <location>
        <begin position="1231"/>
        <end position="1270"/>
    </location>
</feature>
<feature type="region of interest" description="Disordered" evidence="6">
    <location>
        <begin position="544"/>
        <end position="632"/>
    </location>
</feature>
<feature type="region of interest" description="Disordered" evidence="6">
    <location>
        <begin position="805"/>
        <end position="901"/>
    </location>
</feature>
<feature type="region of interest" description="Disordered" evidence="6">
    <location>
        <begin position="1014"/>
        <end position="1042"/>
    </location>
</feature>
<feature type="compositionally biased region" description="Basic and acidic residues" evidence="6">
    <location>
        <begin position="582"/>
        <end position="599"/>
    </location>
</feature>
<feature type="compositionally biased region" description="Low complexity" evidence="6">
    <location>
        <begin position="608"/>
        <end position="620"/>
    </location>
</feature>
<feature type="disulfide bond" evidence="1">
    <location>
        <begin position="38"/>
        <end position="74"/>
    </location>
</feature>
<feature type="disulfide bond" evidence="1">
    <location>
        <begin position="42"/>
        <end position="79"/>
    </location>
</feature>
<feature type="disulfide bond" evidence="1">
    <location>
        <begin position="53"/>
        <end position="64"/>
    </location>
</feature>
<feature type="disulfide bond" evidence="1">
    <location>
        <begin position="316"/>
        <end position="355"/>
    </location>
</feature>
<feature type="disulfide bond" evidence="1">
    <location>
        <begin position="320"/>
        <end position="360"/>
    </location>
</feature>
<feature type="disulfide bond" evidence="1">
    <location>
        <begin position="331"/>
        <end position="343"/>
    </location>
</feature>
<feature type="disulfide bond" evidence="1">
    <location>
        <begin position="754"/>
        <end position="804"/>
    </location>
</feature>
<feature type="disulfide bond" evidence="1">
    <location>
        <begin position="763"/>
        <end position="787"/>
    </location>
</feature>
<feature type="disulfide bond" evidence="1">
    <location>
        <begin position="779"/>
        <end position="800"/>
    </location>
</feature>
<feature type="disulfide bond" evidence="1">
    <location>
        <begin position="931"/>
        <end position="978"/>
    </location>
</feature>
<feature type="disulfide bond" evidence="1">
    <location>
        <begin position="1065"/>
        <end position="1112"/>
    </location>
</feature>
<feature type="disulfide bond" evidence="1">
    <location>
        <begin position="1154"/>
        <end position="1202"/>
    </location>
</feature>
<feature type="splice variant" id="VSP_032269" description="In isoform 2." evidence="9">
    <location>
        <begin position="1"/>
        <end position="801"/>
    </location>
</feature>
<feature type="splice variant" id="VSP_032270" description="In isoform 3." evidence="11">
    <original>GENFYY</original>
    <variation>VLGLQA</variation>
    <location>
        <begin position="124"/>
        <end position="129"/>
    </location>
</feature>
<feature type="splice variant" id="VSP_032271" description="In isoform 3." evidence="11">
    <location>
        <begin position="130"/>
        <end position="1278"/>
    </location>
</feature>
<feature type="splice variant" id="VSP_037595" description="In isoform 6." evidence="12">
    <location>
        <begin position="197"/>
        <end position="223"/>
    </location>
</feature>
<feature type="splice variant" id="VSP_037596" description="In isoform 5." evidence="10">
    <location>
        <begin position="749"/>
        <end position="764"/>
    </location>
</feature>
<feature type="splice variant" id="VSP_032272" description="In isoform 2." evidence="9">
    <original>SSCQGSLHGPRRPQPGASGRSTHTDGGGSSPAGEQEPSQHRTGAAVQRKPWPSGGLWRQDQQPGPGEAPHTQAFGEWPWGQELGSRAPGLGGDAGSPAPPFHSSSY</original>
    <variation>MGPVVPSLGLLEGAPTRMVAAAVLQASRNPASTGQGPRCRESPGLLVVSGGKTNSLGQGRPPTPRPLENGHGGRSLGPGPLDWVEMPDHQRHPSTAPPTDLTSHLS</variation>
    <location>
        <begin position="802"/>
        <end position="907"/>
    </location>
</feature>
<feature type="splice variant" id="VSP_032273" description="In isoform 4." evidence="10">
    <original>RHQLQPDGSLVISRVAVEDGGF</original>
    <variation>STHRPAQGPWQGLRRPARAGQL</variation>
    <location>
        <begin position="1088"/>
        <end position="1109"/>
    </location>
</feature>
<feature type="splice variant" id="VSP_032274" description="In isoform 4." evidence="10">
    <location>
        <begin position="1110"/>
        <end position="1278"/>
    </location>
</feature>
<feature type="sequence variant" id="VAR_039815" description="In dbSNP:rs2280792.">
    <original>S</original>
    <variation>G</variation>
    <location>
        <position position="33"/>
    </location>
</feature>
<feature type="sequence variant" id="VAR_039816" description="In dbSNP:rs741842.">
    <original>A</original>
    <variation>T</variation>
    <location>
        <position position="191"/>
    </location>
</feature>
<feature type="sequence variant" id="VAR_039817" description="In dbSNP:rs17126331.">
    <original>N</original>
    <variation>H</variation>
    <location>
        <position position="356"/>
    </location>
</feature>
<feature type="sequence variant" id="VAR_039818" description="In dbSNP:rs17126352.">
    <original>V</original>
    <variation>I</variation>
    <location>
        <position position="443"/>
    </location>
</feature>
<feature type="sequence variant" id="VAR_039819" description="In dbSNP:rs17126354.">
    <original>A</original>
    <variation>V</variation>
    <location>
        <position position="461"/>
    </location>
</feature>
<feature type="sequence variant" id="VAR_039820" description="In dbSNP:rs17182244.">
    <original>H</original>
    <variation>R</variation>
    <location>
        <position position="628"/>
    </location>
</feature>
<feature type="sequence variant" id="VAR_039821" description="In dbSNP:rs2242616.">
    <original>Q</original>
    <variation>H</variation>
    <location>
        <position position="723"/>
    </location>
</feature>
<feature type="sequence variant" id="VAR_039822" description="In dbSNP:rs177386." evidence="7">
    <original>G</original>
    <variation>R</variation>
    <location>
        <position position="896"/>
    </location>
</feature>
<feature type="sequence variant" id="VAR_039823" description="In dbSNP:rs2107731.">
    <original>L</original>
    <variation>V</variation>
    <location>
        <position position="1192"/>
    </location>
</feature>
<feature type="sequence variant" id="VAR_039824" description="In dbSNP:rs4903104." evidence="8">
    <original>T</original>
    <variation>M</variation>
    <location>
        <position position="1201"/>
    </location>
</feature>
<feature type="sequence variant" id="VAR_039825" description="In dbSNP:rs11626824.">
    <original>S</original>
    <variation>T</variation>
    <location>
        <position position="1260"/>
    </location>
</feature>
<feature type="sequence conflict" description="In Ref. 2; BAG57757." evidence="13" ref="2">
    <original>S</original>
    <variation>P</variation>
    <location>
        <position position="326"/>
    </location>
</feature>
<feature type="sequence conflict" description="In Ref. 2; BAG57757, 5; CAD97826 and 6; BAC85123." evidence="13" ref="2 5 6">
    <original>M</original>
    <variation>R</variation>
    <location>
        <position position="693"/>
    </location>
</feature>
<feature type="sequence conflict" description="In Ref. 2; BAG57189." evidence="13" ref="2">
    <original>N</original>
    <variation>D</variation>
    <location>
        <position position="1162"/>
    </location>
</feature>
<feature type="sequence conflict" description="In Ref. 5; CAD97826." evidence="13" ref="5">
    <original>R</original>
    <variation>K</variation>
    <location>
        <position position="1229"/>
    </location>
</feature>
<evidence type="ECO:0000250" key="1"/>
<evidence type="ECO:0000255" key="2"/>
<evidence type="ECO:0000255" key="3">
    <source>
        <dbReference type="PROSITE-ProRule" id="PRU00031"/>
    </source>
</evidence>
<evidence type="ECO:0000255" key="4">
    <source>
        <dbReference type="PROSITE-ProRule" id="PRU00210"/>
    </source>
</evidence>
<evidence type="ECO:0000255" key="5">
    <source>
        <dbReference type="PROSITE-ProRule" id="PRU00233"/>
    </source>
</evidence>
<evidence type="ECO:0000256" key="6">
    <source>
        <dbReference type="SAM" id="MobiDB-lite"/>
    </source>
</evidence>
<evidence type="ECO:0000269" key="7">
    <source>
    </source>
</evidence>
<evidence type="ECO:0000269" key="8">
    <source>
    </source>
</evidence>
<evidence type="ECO:0000303" key="9">
    <source>
    </source>
</evidence>
<evidence type="ECO:0000303" key="10">
    <source>
    </source>
</evidence>
<evidence type="ECO:0000303" key="11">
    <source>
    </source>
</evidence>
<evidence type="ECO:0000303" key="12">
    <source>
    </source>
</evidence>
<evidence type="ECO:0000305" key="13"/>
<proteinExistence type="evidence at protein level"/>
<sequence length="1278" mass="137700">MRLLLLVPLLLAPAPGSSAPKVRRQSDTWGPWSQWSPCSRTCGGGVSFRERPCYSQRRDGGSSCVGPARSHRSCRTESCPDGARDFRAEQCAEFDGAEFQGRRYRWLPYYSAPNKCELNCIPKGENFYYKHREAVVDGTPCEPGKRDVCVDGSCRVVGCDHELDSSKQEDKCLRCGGDGTTCYPVAGTFDANDLSRGYNQILIVPMGATSILIDEAAASRNFLAVKNVRGEYYLNGHWTIEAARALPAASTILHYERGAEGDLAPERLHARGPTSEPLVIELISQEPNPGVHYEYHLPLRRPSPGFSWSHGSWSDCSAECGGGHQSRLVFCTIDHEAYPDHMCQRQPRPADRRSCNLHPCPETKRWKAGPWAPCSASCGGGSQSRSVYCISSDGAGIQEAVEEAECAGLPGKPPAIQACNLQRCAAWSPEPWGECSVSCGVGVRKRSVTCRGERGSLLHTAACSLEDRPPLTEPCVHEDCPLLSDQAWHVGTWGLCSKSCSSGTRRRQVICAIGPPSHCGSLQHSKPVDVEPCNTQPCHLPQEVPSMQDVHTPASNPWMPLGPQESPASDSRGQWWAAQEHPSARGDHRGERGDPRGDQGTHLSALGPAPSLQQPPYQQPLRSGSGPHDCRHSPHGCCPDGHTASLGPQWQGCPGAPCQQSRYGCCPDRVSVAEGPHHAGCTKSYGGDSTGGMPRSRAVASTVHNTHQPQAQQNEPSECRGSQFGCCYDNVATAAGPLGEGCVGQPSHAYPVRCLLPSAHGSCADWAARWYFVASVGQCNRFWYGGCHGNANNFASEQECMSSCQGSLHGPRRPQPGASGRSTHTDGGGSSPAGEQEPSQHRTGAAVQRKPWPSGGLWRQDQQPGPGEAPHTQAFGEWPWGQELGSRAPGLGGDAGSPAPPFHSSSYRISLAGVEPSLVQAALGQLVRLSCSDDTAPESQAAWQKDGQPISSDRHRLQFDGSLIIHPLQAEDAGTYSCGSTRPGRDSQKIQLRIIGGDMAVLSEAELSRFPQPRDPAQDFGQAGAAGPLGAIPSSHPQPANRLRLDQNQPRVVDASPGQRIRMTCRAEGFPPPAIEWQRDGQPVSSPRHQLQPDGSLVISRVAVEDGGFYTCVAFNGQDRDQRWVQLRVLGELTISGLPPTVTVPEGDTARLLCVVAGESVNIRWSRNGLPVQADGHRVHQSPDGTLLIYNLRARDEGSYTCSAYQGSQAVSRSTEVKVVSPAPTAQPRDPGRDCVDQPELANCDLILQAQLCGNEYYSSFCCASCSRFQPHAQPIWQ</sequence>
<comment type="subcellular location">
    <subcellularLocation>
        <location evidence="13">Secreted</location>
    </subcellularLocation>
</comment>
<comment type="alternative products">
    <event type="alternative splicing"/>
    <isoform>
        <id>O95428-1</id>
        <name>1</name>
        <sequence type="displayed"/>
    </isoform>
    <isoform>
        <id>O95428-2</id>
        <name>2</name>
        <sequence type="described" ref="VSP_032269 VSP_032272"/>
    </isoform>
    <isoform>
        <id>O95428-5</id>
        <name>5</name>
        <sequence type="described" ref="VSP_037596"/>
    </isoform>
    <isoform>
        <id>O95428-6</id>
        <name>6</name>
        <sequence type="described" ref="VSP_037595"/>
    </isoform>
    <isoform>
        <id>O95428-3</id>
        <name>3</name>
        <sequence type="described" ref="VSP_032270 VSP_032271"/>
    </isoform>
    <isoform>
        <id>O95428-4</id>
        <name>4</name>
        <sequence type="described" ref="VSP_032273 VSP_032274"/>
    </isoform>
</comment>
<comment type="similarity">
    <text evidence="13">Belongs to the papilin family.</text>
</comment>
<comment type="sequence caution" evidence="13">
    <conflict type="erroneous gene model prediction">
        <sequence resource="EMBL-CDS" id="AAC97963"/>
    </conflict>
</comment>
<comment type="sequence caution" evidence="13">
    <conflict type="erroneous initiation">
        <sequence resource="EMBL-CDS" id="BAC86235"/>
    </conflict>
    <text>Truncated N-terminus.</text>
</comment>
<comment type="sequence caution" evidence="13">
    <conflict type="erroneous initiation">
        <sequence resource="EMBL-CDS" id="BAG57189"/>
    </conflict>
    <text>Extended N-terminus.</text>
</comment>
<comment type="sequence caution" evidence="13">
    <conflict type="erroneous termination">
        <sequence resource="EMBL-CDS" id="BAG57189"/>
    </conflict>
    <text>Truncated C-terminus.</text>
</comment>
<comment type="sequence caution" evidence="13">
    <conflict type="erroneous initiation">
        <sequence resource="EMBL-CDS" id="BAG57757"/>
    </conflict>
    <text>Extended N-terminus.</text>
</comment>
<comment type="sequence caution" evidence="13">
    <conflict type="miscellaneous discrepancy">
        <sequence resource="EMBL-CDS" id="CAH56406"/>
    </conflict>
    <text>Partially unspliced mRNA.</text>
</comment>
<gene>
    <name type="primary">PAPLN</name>
    <name type="ORF">UNQ2420/PRO4977</name>
</gene>
<accession>O95428</accession>
<accession>B4DES8</accession>
<accession>B4DGE6</accession>
<accession>Q659F2</accession>
<accession>Q6UXJ4</accession>
<accession>Q6ZNM1</accession>
<accession>Q6ZUJ0</accession>
<accession>Q7Z681</accession>
<accession>Q8IVU0</accession>